<accession>A8J6X7</accession>
<evidence type="ECO:0000250" key="1">
    <source>
        <dbReference type="UniProtKB" id="A9Q751"/>
    </source>
</evidence>
<evidence type="ECO:0000256" key="2">
    <source>
        <dbReference type="SAM" id="MobiDB-lite"/>
    </source>
</evidence>
<evidence type="ECO:0000269" key="3">
    <source>
    </source>
</evidence>
<evidence type="ECO:0000303" key="4">
    <source>
    </source>
</evidence>
<evidence type="ECO:0000305" key="5"/>
<sequence>MALASNPRRRLHEVRVQKYVVIAVTWRGAQPMSQRARPSRVVRAAAWGMFARCHPGAAAGWHRCTDLVTRSSARPAYTVASQSFSQGLVEDAPLQNPNTLTYNRVYSKVGNTRILQAEPAVLNFGGYELGKVYSQVLRIRNVRASGTRFHIIPPSTPFFKATCPAKKGLLAPGMTEEVAVEFCPTQYRYYYDCVRVHCEEENLLIPLHAYPVANEALFPTRVDFGRVALGQEVVRSHTLECKVPVDFEYEIVEVKPNPAFRVEPARGVVPGRGRVTVDMWFCPLALTTEEAVIETEVAGVYVPDTMLLSAAEVGLRTKDVRGAIEARKAAAAEQQAALEKGALFRLQLALAEEAARKVALGTAPHSGQQLLTAEQPELEAGGAVHQPSAPVGSSSSGGGGGSDPAFKPEHKRTRVLDKFMRAVWRVVTHQRLQRRLERIKEVLAHLGYDKQRLAEEAANPVLLVSESDRPGTAPTKYLRPEMVRVRPLPLYRDVLFQVHHATDLSHYTDFDELAPFTSKVRERLVPSGLVPPLSDYPTMPDACKNMPYITLEIGNRYGDDRVYGAPDPSYSPYGSLDVDYAVQPRQYDVYDSARHEAVASGGVRSLRGGPGLSDSWLVRQICPAVPTDEQLAKCGGTGIVNTIPN</sequence>
<proteinExistence type="evidence at protein level"/>
<comment type="function">
    <text evidence="1">May play a role in cilium morphogenesis.</text>
</comment>
<comment type="subunit">
    <text evidence="3">Interacts with calmodulin; calcium-dependent. Part of the PDCP1 complex composed of CFAP46, CFAP54, CFAP74 and CFAP221; the PDCP1 complex binds calmodulin.</text>
</comment>
<comment type="subcellular location">
    <subcellularLocation>
        <location evidence="3">Cytoplasm</location>
        <location evidence="3">Cytoskeleton</location>
        <location evidence="3">Cilium axoneme</location>
    </subcellularLocation>
    <subcellularLocation>
        <location evidence="1">Cytoplasm</location>
    </subcellularLocation>
</comment>
<comment type="similarity">
    <text evidence="5">Belongs to the PCDP1 family.</text>
</comment>
<reference key="1">
    <citation type="journal article" date="2007" name="Science">
        <title>The Chlamydomonas genome reveals the evolution of key animal and plant functions.</title>
        <authorList>
            <person name="Merchant S.S."/>
            <person name="Prochnik S.E."/>
            <person name="Vallon O."/>
            <person name="Harris E.H."/>
            <person name="Karpowicz S.J."/>
            <person name="Witman G.B."/>
            <person name="Terry A."/>
            <person name="Salamov A."/>
            <person name="Fritz-Laylin L.K."/>
            <person name="Marechal-Drouard L."/>
            <person name="Marshall W.F."/>
            <person name="Qu L.H."/>
            <person name="Nelson D.R."/>
            <person name="Sanderfoot A.A."/>
            <person name="Spalding M.H."/>
            <person name="Kapitonov V.V."/>
            <person name="Ren Q."/>
            <person name="Ferris P."/>
            <person name="Lindquist E."/>
            <person name="Shapiro H."/>
            <person name="Lucas S.M."/>
            <person name="Grimwood J."/>
            <person name="Schmutz J."/>
            <person name="Cardol P."/>
            <person name="Cerutti H."/>
            <person name="Chanfreau G."/>
            <person name="Chen C.L."/>
            <person name="Cognat V."/>
            <person name="Croft M.T."/>
            <person name="Dent R."/>
            <person name="Dutcher S."/>
            <person name="Fernandez E."/>
            <person name="Fukuzawa H."/>
            <person name="Gonzalez-Ballester D."/>
            <person name="Gonzalez-Halphen D."/>
            <person name="Hallmann A."/>
            <person name="Hanikenne M."/>
            <person name="Hippler M."/>
            <person name="Inwood W."/>
            <person name="Jabbari K."/>
            <person name="Kalanon M."/>
            <person name="Kuras R."/>
            <person name="Lefebvre P.A."/>
            <person name="Lemaire S.D."/>
            <person name="Lobanov A.V."/>
            <person name="Lohr M."/>
            <person name="Manuell A."/>
            <person name="Meier I."/>
            <person name="Mets L."/>
            <person name="Mittag M."/>
            <person name="Mittelmeier T."/>
            <person name="Moroney J.V."/>
            <person name="Moseley J."/>
            <person name="Napoli C."/>
            <person name="Nedelcu A.M."/>
            <person name="Niyogi K."/>
            <person name="Novoselov S.V."/>
            <person name="Paulsen I.T."/>
            <person name="Pazour G.J."/>
            <person name="Purton S."/>
            <person name="Ral J.P."/>
            <person name="Riano-Pachon D.M."/>
            <person name="Riekhof W."/>
            <person name="Rymarquis L."/>
            <person name="Schroda M."/>
            <person name="Stern D."/>
            <person name="Umen J."/>
            <person name="Willows R."/>
            <person name="Wilson N."/>
            <person name="Zimmer S.L."/>
            <person name="Allmer J."/>
            <person name="Balk J."/>
            <person name="Bisova K."/>
            <person name="Chen C.J."/>
            <person name="Elias M."/>
            <person name="Gendler K."/>
            <person name="Hauser C."/>
            <person name="Lamb M.R."/>
            <person name="Ledford H."/>
            <person name="Long J.C."/>
            <person name="Minagawa J."/>
            <person name="Page M.D."/>
            <person name="Pan J."/>
            <person name="Pootakham W."/>
            <person name="Roje S."/>
            <person name="Rose A."/>
            <person name="Stahlberg E."/>
            <person name="Terauchi A.M."/>
            <person name="Yang P."/>
            <person name="Ball S."/>
            <person name="Bowler C."/>
            <person name="Dieckmann C.L."/>
            <person name="Gladyshev V.N."/>
            <person name="Green P."/>
            <person name="Jorgensen R."/>
            <person name="Mayfield S."/>
            <person name="Mueller-Roeber B."/>
            <person name="Rajamani S."/>
            <person name="Sayre R.T."/>
            <person name="Brokstein P."/>
            <person name="Dubchak I."/>
            <person name="Goodstein D."/>
            <person name="Hornick L."/>
            <person name="Huang Y.W."/>
            <person name="Jhaveri J."/>
            <person name="Luo Y."/>
            <person name="Martinez D."/>
            <person name="Ngau W.C."/>
            <person name="Otillar B."/>
            <person name="Poliakov A."/>
            <person name="Porter A."/>
            <person name="Szajkowski L."/>
            <person name="Werner G."/>
            <person name="Zhou K."/>
            <person name="Grigoriev I.V."/>
            <person name="Rokhsar D.S."/>
            <person name="Grossman A.R."/>
        </authorList>
    </citation>
    <scope>NUCLEOTIDE SEQUENCE [LARGE SCALE GENOMIC DNA]</scope>
    <source>
        <strain>CC-503</strain>
    </source>
</reference>
<reference key="2">
    <citation type="journal article" date="2010" name="J. Cell Biol.">
        <title>Pcdp1 is a central apparatus protein that binds Ca2+-calmodulin and regulates ciliary motility.</title>
        <authorList>
            <person name="DiPetrillo C.G."/>
            <person name="Smith E.F."/>
        </authorList>
    </citation>
    <scope>CALMODULIN-BINDING</scope>
    <scope>SUBUNIT</scope>
    <scope>REGION</scope>
    <scope>SUBCELLULAR LOCATION</scope>
</reference>
<name>PCDP1_CHLRE</name>
<dbReference type="EMBL" id="DS496140">
    <property type="protein sequence ID" value="EDP00231.1"/>
    <property type="molecule type" value="Genomic_DNA"/>
</dbReference>
<dbReference type="RefSeq" id="XP_001697291.1">
    <property type="nucleotide sequence ID" value="XM_001697239.1"/>
</dbReference>
<dbReference type="SMR" id="A8J6X7"/>
<dbReference type="PaxDb" id="3055-EDP00231"/>
<dbReference type="eggNOG" id="ENOG502QT0T">
    <property type="taxonomic scope" value="Eukaryota"/>
</dbReference>
<dbReference type="HOGENOM" id="CLU_424783_0_0_1"/>
<dbReference type="GO" id="GO:1990716">
    <property type="term" value="C:axonemal central apparatus"/>
    <property type="evidence" value="ECO:0000314"/>
    <property type="project" value="UniProtKB"/>
</dbReference>
<dbReference type="GO" id="GO:0005930">
    <property type="term" value="C:axoneme"/>
    <property type="evidence" value="ECO:0000314"/>
    <property type="project" value="UniProtKB"/>
</dbReference>
<dbReference type="GO" id="GO:0005516">
    <property type="term" value="F:calmodulin binding"/>
    <property type="evidence" value="ECO:0000314"/>
    <property type="project" value="UniProtKB"/>
</dbReference>
<dbReference type="GO" id="GO:0060271">
    <property type="term" value="P:cilium assembly"/>
    <property type="evidence" value="ECO:0000250"/>
    <property type="project" value="UniProtKB"/>
</dbReference>
<dbReference type="GO" id="GO:0003341">
    <property type="term" value="P:cilium movement"/>
    <property type="evidence" value="ECO:0007669"/>
    <property type="project" value="InterPro"/>
</dbReference>
<dbReference type="Gene3D" id="2.60.40.10">
    <property type="entry name" value="Immunoglobulins"/>
    <property type="match status" value="2"/>
</dbReference>
<dbReference type="InterPro" id="IPR029676">
    <property type="entry name" value="CFAP221"/>
</dbReference>
<dbReference type="InterPro" id="IPR013783">
    <property type="entry name" value="Ig-like_fold"/>
</dbReference>
<dbReference type="PANTHER" id="PTHR46500">
    <property type="entry name" value="CILIA- AND FLAGELLA-ASSOCIATED PROTEIN 221"/>
    <property type="match status" value="1"/>
</dbReference>
<dbReference type="PANTHER" id="PTHR46500:SF1">
    <property type="entry name" value="CILIA- AND FLAGELLA-ASSOCIATED PROTEIN 221"/>
    <property type="match status" value="1"/>
</dbReference>
<dbReference type="Pfam" id="PF24507">
    <property type="entry name" value="Ig_CFAP65_4th"/>
    <property type="match status" value="1"/>
</dbReference>
<dbReference type="Pfam" id="PF14874">
    <property type="entry name" value="PapD-like"/>
    <property type="match status" value="1"/>
</dbReference>
<protein>
    <recommendedName>
        <fullName evidence="5">Cilia- and flagella-associated protein 221 homolog</fullName>
    </recommendedName>
    <alternativeName>
        <fullName evidence="4">Flagella-associated protein 221</fullName>
    </alternativeName>
    <alternativeName>
        <fullName evidence="4">Primary ciliary dyskinesia protein 1</fullName>
    </alternativeName>
</protein>
<organism>
    <name type="scientific">Chlamydomonas reinhardtii</name>
    <name type="common">Chlamydomonas smithii</name>
    <dbReference type="NCBI Taxonomy" id="3055"/>
    <lineage>
        <taxon>Eukaryota</taxon>
        <taxon>Viridiplantae</taxon>
        <taxon>Chlorophyta</taxon>
        <taxon>core chlorophytes</taxon>
        <taxon>Chlorophyceae</taxon>
        <taxon>CS clade</taxon>
        <taxon>Chlamydomonadales</taxon>
        <taxon>Chlamydomonadaceae</taxon>
        <taxon>Chlamydomonas</taxon>
    </lineage>
</organism>
<feature type="chain" id="PRO_0000395001" description="Cilia- and flagella-associated protein 221 homolog">
    <location>
        <begin position="1"/>
        <end position="645"/>
    </location>
</feature>
<feature type="region of interest" description="Disordered" evidence="2">
    <location>
        <begin position="381"/>
        <end position="408"/>
    </location>
</feature>
<feature type="region of interest" description="Interaction with calmodulin" evidence="3">
    <location>
        <begin position="428"/>
        <end position="435"/>
    </location>
</feature>
<keyword id="KW-0112">Calmodulin-binding</keyword>
<keyword id="KW-0966">Cell projection</keyword>
<keyword id="KW-0969">Cilium</keyword>
<keyword id="KW-0970">Cilium biogenesis/degradation</keyword>
<keyword id="KW-0963">Cytoplasm</keyword>
<keyword id="KW-0206">Cytoskeleton</keyword>
<gene>
    <name evidence="5" type="primary">CFAP221</name>
    <name evidence="4" type="synonym">FAP221</name>
    <name evidence="4" type="synonym">PCDP1</name>
    <name type="ORF">CHLREDRAFT_176588</name>
</gene>